<proteinExistence type="inferred from homology"/>
<reference key="1">
    <citation type="journal article" date="2002" name="Lancet">
        <title>Genome and virulence determinants of high virulence community-acquired MRSA.</title>
        <authorList>
            <person name="Baba T."/>
            <person name="Takeuchi F."/>
            <person name="Kuroda M."/>
            <person name="Yuzawa H."/>
            <person name="Aoki K."/>
            <person name="Oguchi A."/>
            <person name="Nagai Y."/>
            <person name="Iwama N."/>
            <person name="Asano K."/>
            <person name="Naimi T."/>
            <person name="Kuroda H."/>
            <person name="Cui L."/>
            <person name="Yamamoto K."/>
            <person name="Hiramatsu K."/>
        </authorList>
    </citation>
    <scope>NUCLEOTIDE SEQUENCE [LARGE SCALE GENOMIC DNA]</scope>
    <source>
        <strain>MW2</strain>
    </source>
</reference>
<feature type="chain" id="PRO_0000054688" description="3-oxoacyl-[acyl-carrier-protein] reductase FabG">
    <location>
        <begin position="1"/>
        <end position="246"/>
    </location>
</feature>
<feature type="active site" description="Proton acceptor" evidence="2">
    <location>
        <position position="154"/>
    </location>
</feature>
<feature type="binding site" evidence="1">
    <location>
        <begin position="11"/>
        <end position="14"/>
    </location>
    <ligand>
        <name>NADP(+)</name>
        <dbReference type="ChEBI" id="CHEBI:58349"/>
    </ligand>
</feature>
<feature type="binding site" evidence="1">
    <location>
        <begin position="62"/>
        <end position="63"/>
    </location>
    <ligand>
        <name>NADP(+)</name>
        <dbReference type="ChEBI" id="CHEBI:58349"/>
    </ligand>
</feature>
<feature type="binding site" evidence="1">
    <location>
        <position position="89"/>
    </location>
    <ligand>
        <name>NADP(+)</name>
        <dbReference type="ChEBI" id="CHEBI:58349"/>
    </ligand>
</feature>
<feature type="binding site" evidence="1">
    <location>
        <position position="141"/>
    </location>
    <ligand>
        <name>substrate</name>
    </ligand>
</feature>
<feature type="binding site" evidence="1">
    <location>
        <begin position="154"/>
        <end position="158"/>
    </location>
    <ligand>
        <name>NADP(+)</name>
        <dbReference type="ChEBI" id="CHEBI:58349"/>
    </ligand>
</feature>
<feature type="binding site" evidence="1">
    <location>
        <position position="187"/>
    </location>
    <ligand>
        <name>NADP(+)</name>
        <dbReference type="ChEBI" id="CHEBI:58349"/>
    </ligand>
</feature>
<accession>P0A0I0</accession>
<accession>Q99QK7</accession>
<gene>
    <name type="primary">fabG</name>
    <name type="ordered locus">MW1114</name>
</gene>
<organism>
    <name type="scientific">Staphylococcus aureus (strain MW2)</name>
    <dbReference type="NCBI Taxonomy" id="196620"/>
    <lineage>
        <taxon>Bacteria</taxon>
        <taxon>Bacillati</taxon>
        <taxon>Bacillota</taxon>
        <taxon>Bacilli</taxon>
        <taxon>Bacillales</taxon>
        <taxon>Staphylococcaceae</taxon>
        <taxon>Staphylococcus</taxon>
    </lineage>
</organism>
<comment type="function">
    <text evidence="1">Catalyzes the NADPH-dependent reduction of beta-ketoacyl-ACP substrates to beta-hydroxyacyl-ACP products, the first reductive step in the elongation cycle of fatty acid biosynthesis.</text>
</comment>
<comment type="catalytic activity">
    <reaction>
        <text>a (3R)-hydroxyacyl-[ACP] + NADP(+) = a 3-oxoacyl-[ACP] + NADPH + H(+)</text>
        <dbReference type="Rhea" id="RHEA:17397"/>
        <dbReference type="Rhea" id="RHEA-COMP:9916"/>
        <dbReference type="Rhea" id="RHEA-COMP:9945"/>
        <dbReference type="ChEBI" id="CHEBI:15378"/>
        <dbReference type="ChEBI" id="CHEBI:57783"/>
        <dbReference type="ChEBI" id="CHEBI:58349"/>
        <dbReference type="ChEBI" id="CHEBI:78776"/>
        <dbReference type="ChEBI" id="CHEBI:78827"/>
        <dbReference type="EC" id="1.1.1.100"/>
    </reaction>
</comment>
<comment type="pathway">
    <text>Lipid metabolism; fatty acid biosynthesis.</text>
</comment>
<comment type="subunit">
    <text evidence="1">Homotetramer.</text>
</comment>
<comment type="similarity">
    <text evidence="3">Belongs to the short-chain dehydrogenases/reductases (SDR) family.</text>
</comment>
<evidence type="ECO:0000250" key="1"/>
<evidence type="ECO:0000255" key="2">
    <source>
        <dbReference type="PROSITE-ProRule" id="PRU10001"/>
    </source>
</evidence>
<evidence type="ECO:0000305" key="3"/>
<sequence>MKMTKSALVTGASRGIGRSIALQLAEEGYNVAVNYAGSKEKAEAVVEEIKAKGVDSFAIQANVADADEVKAMIKEVVSQFGSLDVLVNNAGITRDNLLMRMKEQEWDDVIDTNLKGVFNCIQKATPQMLRQRSGAIINLSSVVGAVGNPGQANYVATKAGVIGLTKSAARELASRGITVNAVAPGFIVSDMTDALSDELKEQMLTQIPLARFGQDTDIANTVAFLASDKAKYITGQTIHVNGGMYM</sequence>
<keyword id="KW-0275">Fatty acid biosynthesis</keyword>
<keyword id="KW-0276">Fatty acid metabolism</keyword>
<keyword id="KW-0444">Lipid biosynthesis</keyword>
<keyword id="KW-0443">Lipid metabolism</keyword>
<keyword id="KW-0521">NADP</keyword>
<keyword id="KW-0560">Oxidoreductase</keyword>
<protein>
    <recommendedName>
        <fullName>3-oxoacyl-[acyl-carrier-protein] reductase FabG</fullName>
        <ecNumber>1.1.1.100</ecNumber>
    </recommendedName>
    <alternativeName>
        <fullName>3-ketoacyl-acyl carrier protein reductase</fullName>
    </alternativeName>
    <alternativeName>
        <fullName>Beta-Ketoacyl-acyl carrier protein reductase</fullName>
    </alternativeName>
    <alternativeName>
        <fullName>Beta-ketoacyl-ACP reductase</fullName>
    </alternativeName>
</protein>
<dbReference type="EC" id="1.1.1.100"/>
<dbReference type="EMBL" id="BA000033">
    <property type="protein sequence ID" value="BAB94979.1"/>
    <property type="molecule type" value="Genomic_DNA"/>
</dbReference>
<dbReference type="SMR" id="P0A0I0"/>
<dbReference type="KEGG" id="sam:MW1114"/>
<dbReference type="HOGENOM" id="CLU_010194_1_3_9"/>
<dbReference type="UniPathway" id="UPA00094"/>
<dbReference type="GO" id="GO:0004316">
    <property type="term" value="F:3-oxoacyl-[acyl-carrier-protein] reductase (NADPH) activity"/>
    <property type="evidence" value="ECO:0000250"/>
    <property type="project" value="UniProtKB"/>
</dbReference>
<dbReference type="GO" id="GO:0051287">
    <property type="term" value="F:NAD binding"/>
    <property type="evidence" value="ECO:0007669"/>
    <property type="project" value="InterPro"/>
</dbReference>
<dbReference type="GO" id="GO:0050661">
    <property type="term" value="F:NADP binding"/>
    <property type="evidence" value="ECO:0000250"/>
    <property type="project" value="UniProtKB"/>
</dbReference>
<dbReference type="GO" id="GO:0030497">
    <property type="term" value="P:fatty acid elongation"/>
    <property type="evidence" value="ECO:0000250"/>
    <property type="project" value="UniProtKB"/>
</dbReference>
<dbReference type="CDD" id="cd05333">
    <property type="entry name" value="BKR_SDR_c"/>
    <property type="match status" value="1"/>
</dbReference>
<dbReference type="FunFam" id="3.40.50.720:FF:000037">
    <property type="entry name" value="3-oxoacyl-[acyl-carrier-protein] reductase FabG"/>
    <property type="match status" value="1"/>
</dbReference>
<dbReference type="Gene3D" id="3.40.50.720">
    <property type="entry name" value="NAD(P)-binding Rossmann-like Domain"/>
    <property type="match status" value="1"/>
</dbReference>
<dbReference type="InterPro" id="IPR011284">
    <property type="entry name" value="3oxo_ACP_reduc"/>
</dbReference>
<dbReference type="InterPro" id="IPR036291">
    <property type="entry name" value="NAD(P)-bd_dom_sf"/>
</dbReference>
<dbReference type="InterPro" id="IPR020904">
    <property type="entry name" value="Sc_DH/Rdtase_CS"/>
</dbReference>
<dbReference type="InterPro" id="IPR050259">
    <property type="entry name" value="SDR"/>
</dbReference>
<dbReference type="InterPro" id="IPR002347">
    <property type="entry name" value="SDR_fam"/>
</dbReference>
<dbReference type="NCBIfam" id="TIGR01830">
    <property type="entry name" value="3oxo_ACP_reduc"/>
    <property type="match status" value="1"/>
</dbReference>
<dbReference type="NCBIfam" id="NF004197">
    <property type="entry name" value="PRK05653.1-1"/>
    <property type="match status" value="1"/>
</dbReference>
<dbReference type="NCBIfam" id="NF004198">
    <property type="entry name" value="PRK05653.1-3"/>
    <property type="match status" value="1"/>
</dbReference>
<dbReference type="NCBIfam" id="NF004199">
    <property type="entry name" value="PRK05653.1-4"/>
    <property type="match status" value="1"/>
</dbReference>
<dbReference type="NCBIfam" id="NF004200">
    <property type="entry name" value="PRK05653.1-5"/>
    <property type="match status" value="1"/>
</dbReference>
<dbReference type="NCBIfam" id="NF005559">
    <property type="entry name" value="PRK07231.1"/>
    <property type="match status" value="1"/>
</dbReference>
<dbReference type="NCBIfam" id="NF009466">
    <property type="entry name" value="PRK12826.1-2"/>
    <property type="match status" value="1"/>
</dbReference>
<dbReference type="PANTHER" id="PTHR42879">
    <property type="entry name" value="3-OXOACYL-(ACYL-CARRIER-PROTEIN) REDUCTASE"/>
    <property type="match status" value="1"/>
</dbReference>
<dbReference type="PANTHER" id="PTHR42879:SF2">
    <property type="entry name" value="3-OXOACYL-[ACYL-CARRIER-PROTEIN] REDUCTASE FABG"/>
    <property type="match status" value="1"/>
</dbReference>
<dbReference type="Pfam" id="PF13561">
    <property type="entry name" value="adh_short_C2"/>
    <property type="match status" value="1"/>
</dbReference>
<dbReference type="PRINTS" id="PR00081">
    <property type="entry name" value="GDHRDH"/>
</dbReference>
<dbReference type="PRINTS" id="PR00080">
    <property type="entry name" value="SDRFAMILY"/>
</dbReference>
<dbReference type="SMART" id="SM00822">
    <property type="entry name" value="PKS_KR"/>
    <property type="match status" value="1"/>
</dbReference>
<dbReference type="SUPFAM" id="SSF51735">
    <property type="entry name" value="NAD(P)-binding Rossmann-fold domains"/>
    <property type="match status" value="1"/>
</dbReference>
<dbReference type="PROSITE" id="PS00061">
    <property type="entry name" value="ADH_SHORT"/>
    <property type="match status" value="1"/>
</dbReference>
<name>FABG_STAAW</name>